<feature type="initiator methionine" description="Removed" evidence="1">
    <location>
        <position position="1"/>
    </location>
</feature>
<feature type="chain" id="PRO_0000130322" description="Small ribosomal subunit protein uS3">
    <location>
        <begin position="2"/>
        <end position="243"/>
    </location>
</feature>
<feature type="domain" description="KH type-2" evidence="3">
    <location>
        <begin position="21"/>
        <end position="92"/>
    </location>
</feature>
<feature type="region of interest" description="Disordered" evidence="4">
    <location>
        <begin position="200"/>
        <end position="243"/>
    </location>
</feature>
<feature type="compositionally biased region" description="Pro residues" evidence="4">
    <location>
        <begin position="231"/>
        <end position="243"/>
    </location>
</feature>
<feature type="modified residue" description="N-acetylalanine" evidence="1">
    <location>
        <position position="2"/>
    </location>
</feature>
<feature type="modified residue" description="Phosphoserine; by PKC/PRKCD" evidence="1">
    <location>
        <position position="6"/>
    </location>
</feature>
<feature type="modified residue" description="Phosphoserine" evidence="1">
    <location>
        <position position="35"/>
    </location>
</feature>
<feature type="modified residue" description="Phosphothreonine; by MAPK" evidence="1">
    <location>
        <position position="42"/>
    </location>
</feature>
<feature type="modified residue" description="N6-acetyllysine" evidence="1">
    <location>
        <position position="62"/>
    </location>
</feature>
<feature type="modified residue" description="Asymmetric dimethylarginine; by PRMT1" evidence="1">
    <location>
        <position position="64"/>
    </location>
</feature>
<feature type="modified residue" description="Asymmetric dimethylarginine; by PRMT1" evidence="1">
    <location>
        <position position="65"/>
    </location>
</feature>
<feature type="modified residue" description="Asymmetric dimethylarginine; by PRMT1" evidence="1">
    <location>
        <position position="67"/>
    </location>
</feature>
<feature type="modified residue" description="Phosphothreonine; by PKB" evidence="1">
    <location>
        <position position="70"/>
    </location>
</feature>
<feature type="modified residue" description="Phosphoserine" evidence="1">
    <location>
        <position position="104"/>
    </location>
</feature>
<feature type="modified residue" description="N6-succinyllysine" evidence="2">
    <location>
        <position position="132"/>
    </location>
</feature>
<feature type="modified residue" description="Phosphoserine; by IKKB" evidence="1">
    <location>
        <position position="209"/>
    </location>
</feature>
<feature type="modified residue" description="Phosphothreonine" evidence="1">
    <location>
        <position position="220"/>
    </location>
</feature>
<feature type="modified residue" description="Phosphothreonine; by CDK1 and PKC/PRKCD" evidence="1">
    <location>
        <position position="221"/>
    </location>
</feature>
<feature type="modified residue" description="Phosphoserine" evidence="1">
    <location>
        <position position="224"/>
    </location>
</feature>
<feature type="modified residue" description="Phosphothreonine" evidence="1">
    <location>
        <position position="242"/>
    </location>
</feature>
<feature type="cross-link" description="Glycyl lysine isopeptide (Lys-Gly) (interchain with G-Cter in ubiquitin)" evidence="1">
    <location>
        <position position="90"/>
    </location>
</feature>
<feature type="cross-link" description="Glycyl lysine isopeptide (Lys-Gly) (interchain with G-Cter in ubiquitin)" evidence="1">
    <location>
        <position position="202"/>
    </location>
</feature>
<feature type="cross-link" description="Glycyl lysine isopeptide (Lys-Gly) (interchain with G-Cter in SUMO2); alternate" evidence="1">
    <location>
        <position position="214"/>
    </location>
</feature>
<feature type="cross-link" description="Glycyl lysine isopeptide (Lys-Gly) (interchain with G-Cter in ubiquitin); alternate" evidence="1">
    <location>
        <position position="214"/>
    </location>
</feature>
<feature type="cross-link" description="Glycyl lysine isopeptide (Lys-Gly) (interchain with G-Cter in SUMO2)" evidence="1">
    <location>
        <position position="230"/>
    </location>
</feature>
<keyword id="KW-0002">3D-structure</keyword>
<keyword id="KW-0007">Acetylation</keyword>
<keyword id="KW-0053">Apoptosis</keyword>
<keyword id="KW-0131">Cell cycle</keyword>
<keyword id="KW-0132">Cell division</keyword>
<keyword id="KW-0963">Cytoplasm</keyword>
<keyword id="KW-0206">Cytoskeleton</keyword>
<keyword id="KW-0903">Direct protein sequencing</keyword>
<keyword id="KW-0227">DNA damage</keyword>
<keyword id="KW-0234">DNA repair</keyword>
<keyword id="KW-0238">DNA-binding</keyword>
<keyword id="KW-1017">Isopeptide bond</keyword>
<keyword id="KW-0456">Lyase</keyword>
<keyword id="KW-0472">Membrane</keyword>
<keyword id="KW-0488">Methylation</keyword>
<keyword id="KW-0496">Mitochondrion</keyword>
<keyword id="KW-0999">Mitochondrion inner membrane</keyword>
<keyword id="KW-0498">Mitosis</keyword>
<keyword id="KW-0539">Nucleus</keyword>
<keyword id="KW-0597">Phosphoprotein</keyword>
<keyword id="KW-1185">Reference proteome</keyword>
<keyword id="KW-0687">Ribonucleoprotein</keyword>
<keyword id="KW-0689">Ribosomal protein</keyword>
<keyword id="KW-0694">RNA-binding</keyword>
<keyword id="KW-0804">Transcription</keyword>
<keyword id="KW-0805">Transcription regulation</keyword>
<keyword id="KW-0810">Translation regulation</keyword>
<keyword id="KW-0832">Ubl conjugation</keyword>
<gene>
    <name type="primary">Rps3</name>
</gene>
<organism>
    <name type="scientific">Rattus norvegicus</name>
    <name type="common">Rat</name>
    <dbReference type="NCBI Taxonomy" id="10116"/>
    <lineage>
        <taxon>Eukaryota</taxon>
        <taxon>Metazoa</taxon>
        <taxon>Chordata</taxon>
        <taxon>Craniata</taxon>
        <taxon>Vertebrata</taxon>
        <taxon>Euteleostomi</taxon>
        <taxon>Mammalia</taxon>
        <taxon>Eutheria</taxon>
        <taxon>Euarchontoglires</taxon>
        <taxon>Glires</taxon>
        <taxon>Rodentia</taxon>
        <taxon>Myomorpha</taxon>
        <taxon>Muroidea</taxon>
        <taxon>Muridae</taxon>
        <taxon>Murinae</taxon>
        <taxon>Rattus</taxon>
    </lineage>
</organism>
<reference key="1">
    <citation type="journal article" date="1990" name="Arch. Biochem. Biophys.">
        <title>The primary structure of rat ribosomal protein S3.</title>
        <authorList>
            <person name="Devi K.R.G."/>
            <person name="Chan Y.-L."/>
            <person name="Wool I.G."/>
        </authorList>
    </citation>
    <scope>NUCLEOTIDE SEQUENCE [MRNA]</scope>
    <scope>PROTEIN SEQUENCE OF 158-172</scope>
    <source>
        <strain>Sprague-Dawley</strain>
        <tissue>Liver</tissue>
    </source>
</reference>
<reference key="2">
    <citation type="journal article" date="2004" name="Genome Res.">
        <title>The status, quality, and expansion of the NIH full-length cDNA project: the Mammalian Gene Collection (MGC).</title>
        <authorList>
            <consortium name="The MGC Project Team"/>
        </authorList>
    </citation>
    <scope>NUCLEOTIDE SEQUENCE [LARGE SCALE MRNA]</scope>
    <source>
        <tissue>Kidney</tissue>
    </source>
</reference>
<reference key="3">
    <citation type="journal article" date="1995" name="J. Biol. Chem.">
        <title>Implication of mammalian ribosomal protein S3 in the processing of DNA damage.</title>
        <authorList>
            <person name="Kim J."/>
            <person name="Chubatsu L.S."/>
            <person name="Admon A."/>
            <person name="Stahl J."/>
            <person name="Fellous R."/>
            <person name="Linn S."/>
        </authorList>
    </citation>
    <scope>FUNCTION</scope>
</reference>
<accession>P62909</accession>
<accession>P17073</accession>
<accession>P47933</accession>
<sequence>MAVQISKKRKFVADGIFKAELNEFLTRELAEDGYSGVEVRVTPTRTEIIILATRTQNVLGEKGRRIRELTAVVQKRFGFPEGSVELYAEKVATRGLCAIAQAESLRYKLLGGLAVRRACYGVLRFIMESGAKGCEVVVSGKLRGQRAKSMKFVDGLMIHSGDPVNYYVDTAVRHVLLRQGVLGIKVKIMLPWDPSGKIGPKKPLPDHVSIVEPKDEILPTTPISEQKGGKPEPPAMPQPVPTA</sequence>
<name>RS3_RAT</name>
<proteinExistence type="evidence at protein level"/>
<dbReference type="EC" id="4.2.99.18" evidence="1"/>
<dbReference type="EMBL" id="X51536">
    <property type="protein sequence ID" value="CAA35916.1"/>
    <property type="molecule type" value="mRNA"/>
</dbReference>
<dbReference type="EMBL" id="BC088450">
    <property type="protein sequence ID" value="AAH88450.1"/>
    <property type="molecule type" value="mRNA"/>
</dbReference>
<dbReference type="PIR" id="S13882">
    <property type="entry name" value="R3RT3"/>
</dbReference>
<dbReference type="RefSeq" id="NP_001009239.1">
    <property type="nucleotide sequence ID" value="NM_001009239.1"/>
</dbReference>
<dbReference type="RefSeq" id="XP_063126321.1">
    <property type="nucleotide sequence ID" value="XM_063270251.1"/>
</dbReference>
<dbReference type="PDB" id="7QGG">
    <property type="method" value="EM"/>
    <property type="resolution" value="2.86 A"/>
    <property type="chains" value="SD=1-243"/>
</dbReference>
<dbReference type="PDBsum" id="7QGG"/>
<dbReference type="EMDB" id="EMD-13954"/>
<dbReference type="SMR" id="P62909"/>
<dbReference type="BioGRID" id="250818">
    <property type="interactions" value="11"/>
</dbReference>
<dbReference type="FunCoup" id="P62909">
    <property type="interactions" value="2944"/>
</dbReference>
<dbReference type="IntAct" id="P62909">
    <property type="interactions" value="7"/>
</dbReference>
<dbReference type="MINT" id="P62909"/>
<dbReference type="STRING" id="10116.ENSRNOP00000023935"/>
<dbReference type="GlyGen" id="P62909">
    <property type="glycosylation" value="1 site, 1 O-linked glycan (1 site)"/>
</dbReference>
<dbReference type="iPTMnet" id="P62909"/>
<dbReference type="PhosphoSitePlus" id="P62909"/>
<dbReference type="jPOST" id="P62909"/>
<dbReference type="PaxDb" id="10116-ENSRNOP00000023935"/>
<dbReference type="Ensembl" id="ENSRNOT00000108507.1">
    <property type="protein sequence ID" value="ENSRNOP00000079648.1"/>
    <property type="gene ID" value="ENSRNOG00000017418.6"/>
</dbReference>
<dbReference type="GeneID" id="140654"/>
<dbReference type="KEGG" id="rno:140654"/>
<dbReference type="UCSC" id="RGD:619888">
    <property type="organism name" value="rat"/>
</dbReference>
<dbReference type="AGR" id="RGD:619888"/>
<dbReference type="CTD" id="6188"/>
<dbReference type="RGD" id="619888">
    <property type="gene designation" value="Rps3"/>
</dbReference>
<dbReference type="eggNOG" id="KOG3181">
    <property type="taxonomic scope" value="Eukaryota"/>
</dbReference>
<dbReference type="GeneTree" id="ENSGT00390000008610"/>
<dbReference type="HOGENOM" id="CLU_058591_2_1_1"/>
<dbReference type="InParanoid" id="P62909"/>
<dbReference type="OrthoDB" id="35839at9989"/>
<dbReference type="PhylomeDB" id="P62909"/>
<dbReference type="TreeFam" id="TF300901"/>
<dbReference type="Reactome" id="R-RNO-156827">
    <property type="pathway name" value="L13a-mediated translational silencing of Ceruloplasmin expression"/>
</dbReference>
<dbReference type="Reactome" id="R-RNO-1799339">
    <property type="pathway name" value="SRP-dependent cotranslational protein targeting to membrane"/>
</dbReference>
<dbReference type="Reactome" id="R-RNO-6791226">
    <property type="pathway name" value="Major pathway of rRNA processing in the nucleolus and cytosol"/>
</dbReference>
<dbReference type="Reactome" id="R-RNO-72649">
    <property type="pathway name" value="Translation initiation complex formation"/>
</dbReference>
<dbReference type="Reactome" id="R-RNO-72689">
    <property type="pathway name" value="Formation of a pool of free 40S subunits"/>
</dbReference>
<dbReference type="Reactome" id="R-RNO-72695">
    <property type="pathway name" value="Formation of the ternary complex, and subsequently, the 43S complex"/>
</dbReference>
<dbReference type="Reactome" id="R-RNO-72702">
    <property type="pathway name" value="Ribosomal scanning and start codon recognition"/>
</dbReference>
<dbReference type="Reactome" id="R-RNO-72706">
    <property type="pathway name" value="GTP hydrolysis and joining of the 60S ribosomal subunit"/>
</dbReference>
<dbReference type="Reactome" id="R-RNO-975956">
    <property type="pathway name" value="Nonsense Mediated Decay (NMD) independent of the Exon Junction Complex (EJC)"/>
</dbReference>
<dbReference type="Reactome" id="R-RNO-975957">
    <property type="pathway name" value="Nonsense Mediated Decay (NMD) enhanced by the Exon Junction Complex (EJC)"/>
</dbReference>
<dbReference type="PRO" id="PR:P62909"/>
<dbReference type="Proteomes" id="UP000002494">
    <property type="component" value="Chromosome 1"/>
</dbReference>
<dbReference type="Bgee" id="ENSRNOG00000017418">
    <property type="expression patterns" value="Expressed in thymus and 18 other cell types or tissues"/>
</dbReference>
<dbReference type="GO" id="GO:0005737">
    <property type="term" value="C:cytoplasm"/>
    <property type="evidence" value="ECO:0000266"/>
    <property type="project" value="RGD"/>
</dbReference>
<dbReference type="GO" id="GO:0098556">
    <property type="term" value="C:cytoplasmic side of rough endoplasmic reticulum membrane"/>
    <property type="evidence" value="ECO:0000266"/>
    <property type="project" value="RGD"/>
</dbReference>
<dbReference type="GO" id="GO:0005829">
    <property type="term" value="C:cytosol"/>
    <property type="evidence" value="ECO:0000266"/>
    <property type="project" value="RGD"/>
</dbReference>
<dbReference type="GO" id="GO:0022626">
    <property type="term" value="C:cytosolic ribosome"/>
    <property type="evidence" value="ECO:0000266"/>
    <property type="project" value="RGD"/>
</dbReference>
<dbReference type="GO" id="GO:0022627">
    <property type="term" value="C:cytosolic small ribosomal subunit"/>
    <property type="evidence" value="ECO:0000314"/>
    <property type="project" value="RGD"/>
</dbReference>
<dbReference type="GO" id="GO:0030425">
    <property type="term" value="C:dendrite"/>
    <property type="evidence" value="ECO:0000314"/>
    <property type="project" value="RGD"/>
</dbReference>
<dbReference type="GO" id="GO:0005743">
    <property type="term" value="C:mitochondrial inner membrane"/>
    <property type="evidence" value="ECO:0000266"/>
    <property type="project" value="RGD"/>
</dbReference>
<dbReference type="GO" id="GO:0005759">
    <property type="term" value="C:mitochondrial matrix"/>
    <property type="evidence" value="ECO:0000266"/>
    <property type="project" value="RGD"/>
</dbReference>
<dbReference type="GO" id="GO:0072686">
    <property type="term" value="C:mitotic spindle"/>
    <property type="evidence" value="ECO:0000266"/>
    <property type="project" value="RGD"/>
</dbReference>
<dbReference type="GO" id="GO:0071159">
    <property type="term" value="C:NF-kappaB complex"/>
    <property type="evidence" value="ECO:0000266"/>
    <property type="project" value="RGD"/>
</dbReference>
<dbReference type="GO" id="GO:0005730">
    <property type="term" value="C:nucleolus"/>
    <property type="evidence" value="ECO:0000266"/>
    <property type="project" value="RGD"/>
</dbReference>
<dbReference type="GO" id="GO:0005634">
    <property type="term" value="C:nucleus"/>
    <property type="evidence" value="ECO:0000314"/>
    <property type="project" value="UniProtKB"/>
</dbReference>
<dbReference type="GO" id="GO:0005886">
    <property type="term" value="C:plasma membrane"/>
    <property type="evidence" value="ECO:0000266"/>
    <property type="project" value="RGD"/>
</dbReference>
<dbReference type="GO" id="GO:0014069">
    <property type="term" value="C:postsynaptic density"/>
    <property type="evidence" value="ECO:0000266"/>
    <property type="project" value="RGD"/>
</dbReference>
<dbReference type="GO" id="GO:1990904">
    <property type="term" value="C:ribonucleoprotein complex"/>
    <property type="evidence" value="ECO:0000250"/>
    <property type="project" value="UniProtKB"/>
</dbReference>
<dbReference type="GO" id="GO:0005840">
    <property type="term" value="C:ribosome"/>
    <property type="evidence" value="ECO:0000266"/>
    <property type="project" value="RGD"/>
</dbReference>
<dbReference type="GO" id="GO:0032587">
    <property type="term" value="C:ruffle membrane"/>
    <property type="evidence" value="ECO:0000266"/>
    <property type="project" value="RGD"/>
</dbReference>
<dbReference type="GO" id="GO:0045202">
    <property type="term" value="C:synapse"/>
    <property type="evidence" value="ECO:0000266"/>
    <property type="project" value="RGD"/>
</dbReference>
<dbReference type="GO" id="GO:0140078">
    <property type="term" value="F:class I DNA-(apurinic or apyrimidinic site) endonuclease activity"/>
    <property type="evidence" value="ECO:0007669"/>
    <property type="project" value="UniProtKB-EC"/>
</dbReference>
<dbReference type="GO" id="GO:0003684">
    <property type="term" value="F:damaged DNA binding"/>
    <property type="evidence" value="ECO:0000266"/>
    <property type="project" value="RGD"/>
</dbReference>
<dbReference type="GO" id="GO:0003677">
    <property type="term" value="F:DNA binding"/>
    <property type="evidence" value="ECO:0000266"/>
    <property type="project" value="RGD"/>
</dbReference>
<dbReference type="GO" id="GO:0004520">
    <property type="term" value="F:DNA endonuclease activity"/>
    <property type="evidence" value="ECO:0000266"/>
    <property type="project" value="RGD"/>
</dbReference>
<dbReference type="GO" id="GO:0003906">
    <property type="term" value="F:DNA-(apurinic or apyrimidinic site) endonuclease activity"/>
    <property type="evidence" value="ECO:0000266"/>
    <property type="project" value="RGD"/>
</dbReference>
<dbReference type="GO" id="GO:0140297">
    <property type="term" value="F:DNA-binding transcription factor binding"/>
    <property type="evidence" value="ECO:0000266"/>
    <property type="project" value="RGD"/>
</dbReference>
<dbReference type="GO" id="GO:0019899">
    <property type="term" value="F:enzyme binding"/>
    <property type="evidence" value="ECO:0000266"/>
    <property type="project" value="RGD"/>
</dbReference>
<dbReference type="GO" id="GO:0030544">
    <property type="term" value="F:Hsp70 protein binding"/>
    <property type="evidence" value="ECO:0000266"/>
    <property type="project" value="RGD"/>
</dbReference>
<dbReference type="GO" id="GO:0051879">
    <property type="term" value="F:Hsp90 protein binding"/>
    <property type="evidence" value="ECO:0000266"/>
    <property type="project" value="RGD"/>
</dbReference>
<dbReference type="GO" id="GO:0019900">
    <property type="term" value="F:kinase binding"/>
    <property type="evidence" value="ECO:0000353"/>
    <property type="project" value="UniProtKB"/>
</dbReference>
<dbReference type="GO" id="GO:0008017">
    <property type="term" value="F:microtubule binding"/>
    <property type="evidence" value="ECO:0000266"/>
    <property type="project" value="RGD"/>
</dbReference>
<dbReference type="GO" id="GO:0003729">
    <property type="term" value="F:mRNA binding"/>
    <property type="evidence" value="ECO:0000266"/>
    <property type="project" value="RGD"/>
</dbReference>
<dbReference type="GO" id="GO:0032357">
    <property type="term" value="F:oxidized purine DNA binding"/>
    <property type="evidence" value="ECO:0000266"/>
    <property type="project" value="RGD"/>
</dbReference>
<dbReference type="GO" id="GO:0032358">
    <property type="term" value="F:oxidized pyrimidine DNA binding"/>
    <property type="evidence" value="ECO:0000266"/>
    <property type="project" value="RGD"/>
</dbReference>
<dbReference type="GO" id="GO:0051018">
    <property type="term" value="F:protein kinase A binding"/>
    <property type="evidence" value="ECO:0000266"/>
    <property type="project" value="RGD"/>
</dbReference>
<dbReference type="GO" id="GO:0019901">
    <property type="term" value="F:protein kinase binding"/>
    <property type="evidence" value="ECO:0000266"/>
    <property type="project" value="RGD"/>
</dbReference>
<dbReference type="GO" id="GO:0044877">
    <property type="term" value="F:protein-containing complex binding"/>
    <property type="evidence" value="ECO:0000266"/>
    <property type="project" value="RGD"/>
</dbReference>
<dbReference type="GO" id="GO:0003723">
    <property type="term" value="F:RNA binding"/>
    <property type="evidence" value="ECO:0000266"/>
    <property type="project" value="RGD"/>
</dbReference>
<dbReference type="GO" id="GO:0070181">
    <property type="term" value="F:small ribosomal subunit rRNA binding"/>
    <property type="evidence" value="ECO:0000266"/>
    <property type="project" value="RGD"/>
</dbReference>
<dbReference type="GO" id="GO:0003735">
    <property type="term" value="F:structural constituent of ribosome"/>
    <property type="evidence" value="ECO:0000266"/>
    <property type="project" value="RGD"/>
</dbReference>
<dbReference type="GO" id="GO:0097100">
    <property type="term" value="F:supercoiled DNA binding"/>
    <property type="evidence" value="ECO:0000266"/>
    <property type="project" value="RGD"/>
</dbReference>
<dbReference type="GO" id="GO:0015631">
    <property type="term" value="F:tubulin binding"/>
    <property type="evidence" value="ECO:0000266"/>
    <property type="project" value="RGD"/>
</dbReference>
<dbReference type="GO" id="GO:0044390">
    <property type="term" value="F:ubiquitin-like protein conjugating enzyme binding"/>
    <property type="evidence" value="ECO:0000266"/>
    <property type="project" value="RGD"/>
</dbReference>
<dbReference type="GO" id="GO:0006915">
    <property type="term" value="P:apoptotic process"/>
    <property type="evidence" value="ECO:0007669"/>
    <property type="project" value="UniProtKB-KW"/>
</dbReference>
<dbReference type="GO" id="GO:0006284">
    <property type="term" value="P:base-excision repair"/>
    <property type="evidence" value="ECO:0000266"/>
    <property type="project" value="RGD"/>
</dbReference>
<dbReference type="GO" id="GO:0051301">
    <property type="term" value="P:cell division"/>
    <property type="evidence" value="ECO:0007669"/>
    <property type="project" value="UniProtKB-KW"/>
</dbReference>
<dbReference type="GO" id="GO:0070301">
    <property type="term" value="P:cellular response to hydrogen peroxide"/>
    <property type="evidence" value="ECO:0000266"/>
    <property type="project" value="RGD"/>
</dbReference>
<dbReference type="GO" id="GO:1990090">
    <property type="term" value="P:cellular response to nerve growth factor stimulus"/>
    <property type="evidence" value="ECO:0000314"/>
    <property type="project" value="UniProtKB"/>
</dbReference>
<dbReference type="GO" id="GO:0034614">
    <property type="term" value="P:cellular response to reactive oxygen species"/>
    <property type="evidence" value="ECO:0000266"/>
    <property type="project" value="RGD"/>
</dbReference>
<dbReference type="GO" id="GO:0071356">
    <property type="term" value="P:cellular response to tumor necrosis factor"/>
    <property type="evidence" value="ECO:0000266"/>
    <property type="project" value="RGD"/>
</dbReference>
<dbReference type="GO" id="GO:0007059">
    <property type="term" value="P:chromosome segregation"/>
    <property type="evidence" value="ECO:0000266"/>
    <property type="project" value="RGD"/>
</dbReference>
<dbReference type="GO" id="GO:0006974">
    <property type="term" value="P:DNA damage response"/>
    <property type="evidence" value="ECO:0000314"/>
    <property type="project" value="UniProtKB"/>
</dbReference>
<dbReference type="GO" id="GO:0006281">
    <property type="term" value="P:DNA repair"/>
    <property type="evidence" value="ECO:0000266"/>
    <property type="project" value="RGD"/>
</dbReference>
<dbReference type="GO" id="GO:0045738">
    <property type="term" value="P:negative regulation of DNA repair"/>
    <property type="evidence" value="ECO:0000266"/>
    <property type="project" value="RGD"/>
</dbReference>
<dbReference type="GO" id="GO:0031397">
    <property type="term" value="P:negative regulation of protein ubiquitination"/>
    <property type="evidence" value="ECO:0000266"/>
    <property type="project" value="RGD"/>
</dbReference>
<dbReference type="GO" id="GO:0017148">
    <property type="term" value="P:negative regulation of translation"/>
    <property type="evidence" value="ECO:0000266"/>
    <property type="project" value="RGD"/>
</dbReference>
<dbReference type="GO" id="GO:0042104">
    <property type="term" value="P:positive regulation of activated T cell proliferation"/>
    <property type="evidence" value="ECO:0000266"/>
    <property type="project" value="RGD"/>
</dbReference>
<dbReference type="GO" id="GO:2001235">
    <property type="term" value="P:positive regulation of apoptotic signaling pathway"/>
    <property type="evidence" value="ECO:0000266"/>
    <property type="project" value="RGD"/>
</dbReference>
<dbReference type="GO" id="GO:1905053">
    <property type="term" value="P:positive regulation of base-excision repair"/>
    <property type="evidence" value="ECO:0000266"/>
    <property type="project" value="RGD"/>
</dbReference>
<dbReference type="GO" id="GO:0045739">
    <property type="term" value="P:positive regulation of DNA repair"/>
    <property type="evidence" value="ECO:0000266"/>
    <property type="project" value="RGD"/>
</dbReference>
<dbReference type="GO" id="GO:0010628">
    <property type="term" value="P:positive regulation of gene expression"/>
    <property type="evidence" value="ECO:0000266"/>
    <property type="project" value="RGD"/>
</dbReference>
<dbReference type="GO" id="GO:0032743">
    <property type="term" value="P:positive regulation of interleukin-2 production"/>
    <property type="evidence" value="ECO:0000266"/>
    <property type="project" value="RGD"/>
</dbReference>
<dbReference type="GO" id="GO:1902231">
    <property type="term" value="P:positive regulation of intrinsic apoptotic signaling pathway in response to DNA damage"/>
    <property type="evidence" value="ECO:0000266"/>
    <property type="project" value="RGD"/>
</dbReference>
<dbReference type="GO" id="GO:0031116">
    <property type="term" value="P:positive regulation of microtubule polymerization"/>
    <property type="evidence" value="ECO:0000266"/>
    <property type="project" value="RGD"/>
</dbReference>
<dbReference type="GO" id="GO:1901224">
    <property type="term" value="P:positive regulation of non-canonical NF-kappaB signal transduction"/>
    <property type="evidence" value="ECO:0000266"/>
    <property type="project" value="RGD"/>
</dbReference>
<dbReference type="GO" id="GO:0031334">
    <property type="term" value="P:positive regulation of protein-containing complex assembly"/>
    <property type="evidence" value="ECO:0000266"/>
    <property type="project" value="RGD"/>
</dbReference>
<dbReference type="GO" id="GO:0050862">
    <property type="term" value="P:positive regulation of T cell receptor signaling pathway"/>
    <property type="evidence" value="ECO:0000266"/>
    <property type="project" value="RGD"/>
</dbReference>
<dbReference type="GO" id="GO:0042981">
    <property type="term" value="P:regulation of apoptotic process"/>
    <property type="evidence" value="ECO:0000315"/>
    <property type="project" value="UniProtKB"/>
</dbReference>
<dbReference type="GO" id="GO:0061481">
    <property type="term" value="P:response to TNF agonist"/>
    <property type="evidence" value="ECO:0000266"/>
    <property type="project" value="RGD"/>
</dbReference>
<dbReference type="GO" id="GO:0051225">
    <property type="term" value="P:spindle assembly"/>
    <property type="evidence" value="ECO:0000266"/>
    <property type="project" value="RGD"/>
</dbReference>
<dbReference type="GO" id="GO:0006412">
    <property type="term" value="P:translation"/>
    <property type="evidence" value="ECO:0000305"/>
    <property type="project" value="RGD"/>
</dbReference>
<dbReference type="CDD" id="cd02413">
    <property type="entry name" value="KH-II_40S_S3"/>
    <property type="match status" value="1"/>
</dbReference>
<dbReference type="FunFam" id="3.30.1140.32:FF:000005">
    <property type="entry name" value="40S ribosomal protein S3"/>
    <property type="match status" value="1"/>
</dbReference>
<dbReference type="FunFam" id="3.30.300.20:FF:000006">
    <property type="entry name" value="40S ribosomal protein S3"/>
    <property type="match status" value="1"/>
</dbReference>
<dbReference type="Gene3D" id="3.30.300.20">
    <property type="match status" value="1"/>
</dbReference>
<dbReference type="Gene3D" id="3.30.1140.32">
    <property type="entry name" value="Ribosomal protein S3, C-terminal domain"/>
    <property type="match status" value="1"/>
</dbReference>
<dbReference type="InterPro" id="IPR015946">
    <property type="entry name" value="KH_dom-like_a/b"/>
</dbReference>
<dbReference type="InterPro" id="IPR004044">
    <property type="entry name" value="KH_dom_type_2"/>
</dbReference>
<dbReference type="InterPro" id="IPR009019">
    <property type="entry name" value="KH_sf_prok-type"/>
</dbReference>
<dbReference type="InterPro" id="IPR036419">
    <property type="entry name" value="Ribosomal_S3_C_sf"/>
</dbReference>
<dbReference type="InterPro" id="IPR001351">
    <property type="entry name" value="Ribosomal_uS3_C"/>
</dbReference>
<dbReference type="InterPro" id="IPR018280">
    <property type="entry name" value="Ribosomal_uS3_CS"/>
</dbReference>
<dbReference type="InterPro" id="IPR005703">
    <property type="entry name" value="Ribosomal_uS3_euk/arc"/>
</dbReference>
<dbReference type="NCBIfam" id="NF003219">
    <property type="entry name" value="PRK04191.1"/>
    <property type="match status" value="1"/>
</dbReference>
<dbReference type="NCBIfam" id="TIGR01008">
    <property type="entry name" value="uS3_euk_arch"/>
    <property type="match status" value="1"/>
</dbReference>
<dbReference type="PANTHER" id="PTHR11760">
    <property type="entry name" value="30S/40S RIBOSOMAL PROTEIN S3"/>
    <property type="match status" value="1"/>
</dbReference>
<dbReference type="PANTHER" id="PTHR11760:SF32">
    <property type="entry name" value="SMALL RIBOSOMAL SUBUNIT PROTEIN US3"/>
    <property type="match status" value="1"/>
</dbReference>
<dbReference type="Pfam" id="PF07650">
    <property type="entry name" value="KH_2"/>
    <property type="match status" value="1"/>
</dbReference>
<dbReference type="Pfam" id="PF00189">
    <property type="entry name" value="Ribosomal_S3_C"/>
    <property type="match status" value="1"/>
</dbReference>
<dbReference type="SUPFAM" id="SSF54814">
    <property type="entry name" value="Prokaryotic type KH domain (KH-domain type II)"/>
    <property type="match status" value="1"/>
</dbReference>
<dbReference type="SUPFAM" id="SSF54821">
    <property type="entry name" value="Ribosomal protein S3 C-terminal domain"/>
    <property type="match status" value="1"/>
</dbReference>
<dbReference type="PROSITE" id="PS50823">
    <property type="entry name" value="KH_TYPE_2"/>
    <property type="match status" value="1"/>
</dbReference>
<dbReference type="PROSITE" id="PS00548">
    <property type="entry name" value="RIBOSOMAL_S3"/>
    <property type="match status" value="1"/>
</dbReference>
<evidence type="ECO:0000250" key="1">
    <source>
        <dbReference type="UniProtKB" id="P23396"/>
    </source>
</evidence>
<evidence type="ECO:0000250" key="2">
    <source>
        <dbReference type="UniProtKB" id="P62908"/>
    </source>
</evidence>
<evidence type="ECO:0000255" key="3">
    <source>
        <dbReference type="PROSITE-ProRule" id="PRU00118"/>
    </source>
</evidence>
<evidence type="ECO:0000256" key="4">
    <source>
        <dbReference type="SAM" id="MobiDB-lite"/>
    </source>
</evidence>
<evidence type="ECO:0000269" key="5">
    <source>
    </source>
</evidence>
<evidence type="ECO:0000305" key="6"/>
<comment type="function">
    <text evidence="1 5">Component of the small ribosomal subunit (By similarity). The ribosome is a large ribonucleoprotein complex responsible for the synthesis of proteins in the cell (By similarity). Has endonuclease activity and plays a role in repair of damaged DNA (PubMed:7775413). Cleaves phosphodiester bonds of DNAs containing altered bases with broad specificity and cleaves supercoiled DNA more efficiently than relaxed DNA (By similarity). Displays high binding affinity for 7,8-dihydro-8-oxoguanine (8-oxoG), a common DNA lesion caused by reactive oxygen species (ROS) (By similarity). Has also been shown to bind with similar affinity to intact and damaged DNA (By similarity). Stimulates the N-glycosylase activity of the base excision protein OGG1 (By similarity). Enhances the uracil excision activity of UNG1 (By similarity). Also stimulates the cleavage of the phosphodiester backbone by APEX1 (By similarity). When located in the mitochondrion, reduces cellular ROS levels and mitochondrial DNA damage. Has also been shown to negatively regulate DNA repair in cells exposed to hydrogen peroxide (By similarity). Plays a role in regulating transcription as part of the NF-kappa-B p65-p50 complex where it binds to the RELA/p65 subunit, enhances binding of the complex to DNA and promotes transcription of target genes (By similarity). Represses its own translation by binding to its cognate mRNA (By similarity). Binds to and protects TP53/p53 from MDM2-mediated ubiquitination (By similarity). Involved in spindle formation and chromosome movement during mitosis by regulating microtubule polymerization (By similarity). Involved in induction of apoptosis through its role in activation of CASP8 (By similarity). Induces neuronal apoptosis by interacting with the E2F1 transcription factor and acting synergistically with it to up-regulate pro-apoptotic proteins BCL2L11/BIM and HRK/Dp5 (By similarity). Interacts with TRADD following exposure to UV radiation and induces apoptosis by caspase-dependent JNK activation (By similarity).</text>
</comment>
<comment type="catalytic activity">
    <reaction evidence="1">
        <text>2'-deoxyribonucleotide-(2'-deoxyribose 5'-phosphate)-2'-deoxyribonucleotide-DNA = a 3'-end 2'-deoxyribonucleotide-(2,3-dehydro-2,3-deoxyribose 5'-phosphate)-DNA + a 5'-end 5'-phospho-2'-deoxyribonucleoside-DNA + H(+)</text>
        <dbReference type="Rhea" id="RHEA:66592"/>
        <dbReference type="Rhea" id="RHEA-COMP:13180"/>
        <dbReference type="Rhea" id="RHEA-COMP:16897"/>
        <dbReference type="Rhea" id="RHEA-COMP:17067"/>
        <dbReference type="ChEBI" id="CHEBI:15378"/>
        <dbReference type="ChEBI" id="CHEBI:136412"/>
        <dbReference type="ChEBI" id="CHEBI:157695"/>
        <dbReference type="ChEBI" id="CHEBI:167181"/>
        <dbReference type="EC" id="4.2.99.18"/>
    </reaction>
</comment>
<comment type="subunit">
    <text evidence="1 2">Component of the 40S small ribosomal subunit. Identified in a IGF2BP1-dependent mRNP granule complex containing untranslated mRNAs. Interacts with HNRPD. Interacts with PRMT1; the interaction methylates RPS3. Interacts with SUMO1; the interaction sumoylates RPS3. Interacts with UBC9. Interacts with CDK1; the interaction phosphorylates RPS3. Interacts with PRKCD; the interaction phosphorylates RPS3. Interacts with PKB/AKT; the interaction phosphorylates RPS3. Interacts with E2F1; the interaction occurs in the absence of nerve growth factor and increases transcription of pro-apoptotic proteins BCL2L11/BIM and HRK/Dp5. Interacts with the base excision repair proteins APEX1 and OGG1; interaction with OGG1 increases OGG1 N-glycosylase activity. Interacts with UNG; the interaction increases the uracil excision activity of UNG1. Interacts with HSP90; the interaction prevents the ubiquitination and proteasome-dependent degradation of RPS3 and is suppressed by increased ROS levels. Interacts with TOM70; the interaction promotes translocation of RPS3 to the mitochondrion. Interacts (via N-terminus) with RELA (via N-terminus); the interaction enhances the DNA-binding activity of the NF-kappa-B p65-p50 complex. Interacts with NFKBIA; the interaction is direct and may bridge the interaction between RPS3 and RELA. Interacts with IKKB; the interaction phosphorylates RPS3 and enhances its translocation to the nucleus. Interacts (via KH domain) with MDM2 and TP53. Interacts with TRADD. Interacts with CRY1.</text>
</comment>
<comment type="subcellular location">
    <subcellularLocation>
        <location evidence="1">Cytoplasm</location>
    </subcellularLocation>
    <subcellularLocation>
        <location evidence="1">Nucleus</location>
    </subcellularLocation>
    <subcellularLocation>
        <location evidence="1">Nucleus</location>
        <location evidence="1">Nucleolus</location>
    </subcellularLocation>
    <subcellularLocation>
        <location evidence="1">Mitochondrion inner membrane</location>
        <topology evidence="1">Peripheral membrane protein</topology>
    </subcellularLocation>
    <subcellularLocation>
        <location evidence="1">Cytoplasm</location>
        <location evidence="1">Cytoskeleton</location>
        <location evidence="1">Spindle</location>
    </subcellularLocation>
    <text evidence="1 2">In normal cells, located mainly in the cytoplasm with small amounts in the nucleus but translocates to the nucleus in cells undergoing apoptosis. Nuclear translocation is induced by DNA damaging agents such as hydrogen peroxide. Accumulates in the mitochondrion in response to increased ROS levels. Localizes to the spindle during mitosis. Localized in cytoplasmic mRNP granules containing untranslated mRNAs.</text>
</comment>
<comment type="PTM">
    <text evidence="1">Methylation by PRMT1 is required for import into the nucleolus and for ribosome assembly.</text>
</comment>
<comment type="PTM">
    <text evidence="1">Sumoylation by SUMO1 enhances protein stability through increased resistance to proteolysis. Sumoylation occurs at one or more of the three consensus sites, Lys-18, Lys-214 and Lys-230.</text>
</comment>
<comment type="PTM">
    <text evidence="1">Phosphorylation at Thr-221 by CDK1 occurs mainly in G2/M phase. Phosphorylation by PRKCD occurs on a non-ribosomal-associated form which results in translocation of RPS3 to the nucleus and enhances its endonuclease activity. Phosphorylated on Ser-209 by IKKB in response to activation of the NF-kappa-B p65-p50 complex which enhances the association of RPS3 with importin-alpha and mediates the nuclear translocation of RPS3. Phosphorylation by MAPK is required for translocation to the nucleus following exposure of cells to DNA damaging agents such as hydrogen peroxide. Phosphorylation by PKB/AKT mediates RPS3 nuclear translocation, enhances RPS3 endonuclease activity and suppresses RPS3-induced neuronal apoptosis.</text>
</comment>
<comment type="PTM">
    <text evidence="1">Ubiquitinated; ubiquitination is prevented by interaction with HSP90 which stabilizes the protein. Monoubiquitinated at Lys-214 by RNF10 and ZNF598 when a ribosome has stalled during translation of poly(A) sequences, leading to preclude synthesis of a long poly-lysine tail and initiate the ribosome quality control (RQC) pathway to degrade the potentially detrimental aberrant nascent polypeptide. Deubiquitinated at Lys-214 by USP10, preventing degradation by the proteasome and promoting 40S ribosome subunit recycling following ribosome dissociation.</text>
</comment>
<comment type="PTM">
    <text evidence="2">Ufmylated by UFL1.</text>
</comment>
<comment type="similarity">
    <text evidence="6">Belongs to the universal ribosomal protein uS3 family.</text>
</comment>
<protein>
    <recommendedName>
        <fullName evidence="6">Small ribosomal subunit protein uS3</fullName>
        <ecNumber evidence="1">4.2.99.18</ecNumber>
    </recommendedName>
    <alternativeName>
        <fullName>40S ribosomal protein S3</fullName>
    </alternativeName>
</protein>